<accession>P28754</accession>
<organism>
    <name type="scientific">Geobacillus stearothermophilus</name>
    <name type="common">Bacillus stearothermophilus</name>
    <dbReference type="NCBI Taxonomy" id="1422"/>
    <lineage>
        <taxon>Bacteria</taxon>
        <taxon>Bacillati</taxon>
        <taxon>Bacillota</taxon>
        <taxon>Bacilli</taxon>
        <taxon>Bacillales</taxon>
        <taxon>Anoxybacillaceae</taxon>
        <taxon>Geobacillus</taxon>
    </lineage>
</organism>
<feature type="chain" id="PRO_0000049809" description="Uncharacterized protein in sodM 3'region">
    <location>
        <begin position="1"/>
        <end position="214"/>
    </location>
</feature>
<feature type="transmembrane region" description="Helical" evidence="1">
    <location>
        <begin position="18"/>
        <end position="38"/>
    </location>
</feature>
<feature type="transmembrane region" description="Helical" evidence="1">
    <location>
        <begin position="51"/>
        <end position="71"/>
    </location>
</feature>
<feature type="transmembrane region" description="Helical" evidence="1">
    <location>
        <begin position="80"/>
        <end position="100"/>
    </location>
</feature>
<feature type="transmembrane region" description="Helical" evidence="1">
    <location>
        <begin position="108"/>
        <end position="128"/>
    </location>
</feature>
<feature type="transmembrane region" description="Helical" evidence="1">
    <location>
        <begin position="145"/>
        <end position="165"/>
    </location>
</feature>
<comment type="subcellular location">
    <subcellularLocation>
        <location evidence="2">Cell membrane</location>
        <topology evidence="2">Multi-pass membrane protein</topology>
    </subcellularLocation>
</comment>
<name>YQGE_GEOSE</name>
<dbReference type="EMBL" id="M81914">
    <property type="protein sequence ID" value="AAA22768.1"/>
    <property type="molecule type" value="Genomic_DNA"/>
</dbReference>
<dbReference type="EMBL" id="M81188">
    <property type="protein sequence ID" value="AAA22766.1"/>
    <property type="molecule type" value="Genomic_DNA"/>
</dbReference>
<dbReference type="PIR" id="S27523">
    <property type="entry name" value="S27523"/>
</dbReference>
<dbReference type="SMR" id="P28754"/>
<dbReference type="GO" id="GO:0005886">
    <property type="term" value="C:plasma membrane"/>
    <property type="evidence" value="ECO:0007669"/>
    <property type="project" value="UniProtKB-SubCell"/>
</dbReference>
<dbReference type="GO" id="GO:0022857">
    <property type="term" value="F:transmembrane transporter activity"/>
    <property type="evidence" value="ECO:0007669"/>
    <property type="project" value="InterPro"/>
</dbReference>
<dbReference type="Gene3D" id="1.20.1250.20">
    <property type="entry name" value="MFS general substrate transporter like domains"/>
    <property type="match status" value="1"/>
</dbReference>
<dbReference type="InterPro" id="IPR011701">
    <property type="entry name" value="MFS"/>
</dbReference>
<dbReference type="InterPro" id="IPR036259">
    <property type="entry name" value="MFS_trans_sf"/>
</dbReference>
<dbReference type="InterPro" id="IPR052528">
    <property type="entry name" value="Sugar_transport-like"/>
</dbReference>
<dbReference type="PANTHER" id="PTHR23526">
    <property type="entry name" value="INTEGRAL MEMBRANE TRANSPORT PROTEIN-RELATED"/>
    <property type="match status" value="1"/>
</dbReference>
<dbReference type="PANTHER" id="PTHR23526:SF2">
    <property type="entry name" value="MAJOR FACILITATOR SUPERFAMILY (MFS) PROFILE DOMAIN-CONTAINING PROTEIN"/>
    <property type="match status" value="1"/>
</dbReference>
<dbReference type="Pfam" id="PF07690">
    <property type="entry name" value="MFS_1"/>
    <property type="match status" value="1"/>
</dbReference>
<dbReference type="SUPFAM" id="SSF103473">
    <property type="entry name" value="MFS general substrate transporter"/>
    <property type="match status" value="1"/>
</dbReference>
<reference key="1">
    <citation type="submission" date="1991-12" db="EMBL/GenBank/DDBJ databases">
        <authorList>
            <person name="Brehm J.K."/>
            <person name="Chambers S.P."/>
            <person name="Bown K.J."/>
            <person name="Atkinson T."/>
            <person name="Minton N.P."/>
        </authorList>
    </citation>
    <scope>NUCLEOTIDE SEQUENCE [GENOMIC DNA]</scope>
</reference>
<keyword id="KW-1003">Cell membrane</keyword>
<keyword id="KW-0472">Membrane</keyword>
<keyword id="KW-0812">Transmembrane</keyword>
<keyword id="KW-1133">Transmembrane helix</keyword>
<proteinExistence type="predicted"/>
<evidence type="ECO:0000255" key="1"/>
<evidence type="ECO:0000305" key="2"/>
<sequence length="214" mass="23616">MAFFQKLTGQEQVNRDLLLLLCIGGFYALGVSLSNTFVNIYLWKQTGDFRDLALYNLAVVTMQPLTFIVAGRLAKQIDRILVLRLGVSCLAVFFVTVLLVGSRAHQYLLVLGALLGVGYGFYWLAFNVLTFEITEPETRDFFNGFFGVLTSSAGMIGPIAAGYIISSLHGAKGYTFVFLAVARLVSCRCAAQLFLEAPRGRGEIFIFPHFKGTE</sequence>
<protein>
    <recommendedName>
        <fullName>Uncharacterized protein in sodM 3'region</fullName>
    </recommendedName>
    <alternativeName>
        <fullName>ORFB</fullName>
    </alternativeName>
</protein>